<keyword id="KW-1003">Cell membrane</keyword>
<keyword id="KW-0472">Membrane</keyword>
<keyword id="KW-1185">Reference proteome</keyword>
<keyword id="KW-0812">Transmembrane</keyword>
<keyword id="KW-1133">Transmembrane helix</keyword>
<keyword id="KW-0813">Transport</keyword>
<keyword id="KW-0843">Virulence</keyword>
<evidence type="ECO:0000255" key="1"/>
<evidence type="ECO:0000269" key="2">
    <source>
    </source>
</evidence>
<evidence type="ECO:0000303" key="3">
    <source>
    </source>
</evidence>
<evidence type="ECO:0000305" key="4"/>
<evidence type="ECO:0000305" key="5">
    <source>
    </source>
</evidence>
<comment type="function">
    <text evidence="2">Probable glycerophosphodiester transporter (PubMed:24114876). Does not possess detectable glycerophosphoinositol (GroPIns) transport activity (PubMed:24114876). Might be involved in the uptake of glycerophosphocholine (GroPCho) (PubMed:24114876). The expanded ability to utilize GroPIns and GroPCho results from the organism's pathogenic nature and its need to occupy a variety of environments within its host organism (PubMed:24114876). This possibility is buttressed by the fact that GroPIns and GroPCho are present and abundant in human fluids (PubMed:24114876).</text>
</comment>
<comment type="subcellular location">
    <subcellularLocation>
        <location evidence="4">Cell membrane</location>
        <topology evidence="1">Multi-pass membrane protein</topology>
    </subcellularLocation>
</comment>
<comment type="induction">
    <text evidence="2">In contrast to the other glycerophosphodiester transporters, expression is largely unresponsive to phosphate levels (PubMed:24114876).</text>
</comment>
<comment type="disruption phenotype">
    <text evidence="2">Triple deletion of GIT2, GIT3 and GIT4 impairs the uptake of glycerophosphocholine (GroPCho) and reduces virulence in a mouse model of blood stream infection (PubMed:24114876).</text>
</comment>
<comment type="similarity">
    <text evidence="4">Belongs to the major facilitator superfamily. Sugar transporter (TC 2.A.1.1) family.</text>
</comment>
<feature type="chain" id="PRO_0000439799" description="Glycerophosphodiester transporter GIT2">
    <location>
        <begin position="1"/>
        <end position="534"/>
    </location>
</feature>
<feature type="transmembrane region" description="Helical" evidence="1">
    <location>
        <begin position="63"/>
        <end position="83"/>
    </location>
</feature>
<feature type="transmembrane region" description="Helical" evidence="1">
    <location>
        <begin position="96"/>
        <end position="116"/>
    </location>
</feature>
<feature type="transmembrane region" description="Helical" evidence="1">
    <location>
        <begin position="135"/>
        <end position="155"/>
    </location>
</feature>
<feature type="transmembrane region" description="Helical" evidence="1">
    <location>
        <begin position="163"/>
        <end position="183"/>
    </location>
</feature>
<feature type="transmembrane region" description="Helical" evidence="1">
    <location>
        <begin position="202"/>
        <end position="222"/>
    </location>
</feature>
<feature type="transmembrane region" description="Helical" evidence="1">
    <location>
        <begin position="230"/>
        <end position="250"/>
    </location>
</feature>
<feature type="transmembrane region" description="Helical" evidence="1">
    <location>
        <begin position="289"/>
        <end position="309"/>
    </location>
</feature>
<feature type="transmembrane region" description="Helical" evidence="1">
    <location>
        <begin position="322"/>
        <end position="342"/>
    </location>
</feature>
<feature type="transmembrane region" description="Helical" evidence="1">
    <location>
        <begin position="350"/>
        <end position="370"/>
    </location>
</feature>
<feature type="transmembrane region" description="Helical" evidence="1">
    <location>
        <begin position="377"/>
        <end position="397"/>
    </location>
</feature>
<feature type="transmembrane region" description="Helical" evidence="1">
    <location>
        <begin position="417"/>
        <end position="437"/>
    </location>
</feature>
<feature type="transmembrane region" description="Helical" evidence="1">
    <location>
        <begin position="453"/>
        <end position="473"/>
    </location>
</feature>
<dbReference type="EMBL" id="CP017627">
    <property type="protein sequence ID" value="AOW29531.1"/>
    <property type="molecule type" value="Genomic_DNA"/>
</dbReference>
<dbReference type="RefSeq" id="XP_715740.2">
    <property type="nucleotide sequence ID" value="XM_710647.2"/>
</dbReference>
<dbReference type="SMR" id="A0A1D8PN12"/>
<dbReference type="STRING" id="237561.A0A1D8PN12"/>
<dbReference type="EnsemblFungi" id="C5_00890C_A-T">
    <property type="protein sequence ID" value="C5_00890C_A-T-p1"/>
    <property type="gene ID" value="C5_00890C_A"/>
</dbReference>
<dbReference type="GeneID" id="3642633"/>
<dbReference type="KEGG" id="cal:CAALFM_C500890CA"/>
<dbReference type="CGD" id="CAL0000177809">
    <property type="gene designation" value="GIT2"/>
</dbReference>
<dbReference type="VEuPathDB" id="FungiDB:C5_00890C_A"/>
<dbReference type="eggNOG" id="KOG0252">
    <property type="taxonomic scope" value="Eukaryota"/>
</dbReference>
<dbReference type="InParanoid" id="A0A1D8PN12"/>
<dbReference type="OMA" id="WIFPAIQ"/>
<dbReference type="OrthoDB" id="2261376at2759"/>
<dbReference type="Proteomes" id="UP000000559">
    <property type="component" value="Chromosome 5"/>
</dbReference>
<dbReference type="GO" id="GO:0016020">
    <property type="term" value="C:membrane"/>
    <property type="evidence" value="ECO:0000318"/>
    <property type="project" value="GO_Central"/>
</dbReference>
<dbReference type="GO" id="GO:0005886">
    <property type="term" value="C:plasma membrane"/>
    <property type="evidence" value="ECO:0007669"/>
    <property type="project" value="UniProtKB-SubCell"/>
</dbReference>
<dbReference type="GO" id="GO:0022857">
    <property type="term" value="F:transmembrane transporter activity"/>
    <property type="evidence" value="ECO:0007669"/>
    <property type="project" value="InterPro"/>
</dbReference>
<dbReference type="GO" id="GO:0015711">
    <property type="term" value="P:organic anion transport"/>
    <property type="evidence" value="ECO:0007669"/>
    <property type="project" value="UniProtKB-ARBA"/>
</dbReference>
<dbReference type="FunFam" id="1.20.1250.20:FF:000140">
    <property type="entry name" value="Putative MFS phospholipid transporter"/>
    <property type="match status" value="1"/>
</dbReference>
<dbReference type="Gene3D" id="1.20.1250.20">
    <property type="entry name" value="MFS general substrate transporter like domains"/>
    <property type="match status" value="1"/>
</dbReference>
<dbReference type="InterPro" id="IPR020846">
    <property type="entry name" value="MFS_dom"/>
</dbReference>
<dbReference type="InterPro" id="IPR005828">
    <property type="entry name" value="MFS_sugar_transport-like"/>
</dbReference>
<dbReference type="InterPro" id="IPR036259">
    <property type="entry name" value="MFS_trans_sf"/>
</dbReference>
<dbReference type="PANTHER" id="PTHR23508">
    <property type="entry name" value="CARBOXYLIC ACID TRANSPORTER PROTEIN HOMOLOG"/>
    <property type="match status" value="1"/>
</dbReference>
<dbReference type="PANTHER" id="PTHR23508:SF10">
    <property type="entry name" value="CARBOXYLIC ACID TRANSPORTER PROTEIN HOMOLOG"/>
    <property type="match status" value="1"/>
</dbReference>
<dbReference type="Pfam" id="PF00083">
    <property type="entry name" value="Sugar_tr"/>
    <property type="match status" value="2"/>
</dbReference>
<dbReference type="SUPFAM" id="SSF103473">
    <property type="entry name" value="MFS general substrate transporter"/>
    <property type="match status" value="1"/>
</dbReference>
<dbReference type="PROSITE" id="PS50850">
    <property type="entry name" value="MFS"/>
    <property type="match status" value="1"/>
</dbReference>
<protein>
    <recommendedName>
        <fullName evidence="5">Glycerophosphodiester transporter GIT2</fullName>
    </recommendedName>
</protein>
<accession>A0A1D8PN12</accession>
<gene>
    <name evidence="3" type="primary">GIT2</name>
    <name type="ordered locus">CAALFM_C500890CA</name>
</gene>
<name>GIT2_CANAL</name>
<sequence length="534" mass="59304">MASRDLPHSLNDLAFGWIKHLKEEIIINKNSQQLVDEDFQPDEDVTKETKVKLNNLWPAFASGAGLFADGYVNNSIGIVMACLKILYGDEFTKSNAISNIGSIGFVGTVVGQLSFGYISDRVARKGGMMTANIMLIAFTLLCAVGSWGTTIQGFFACLTVWRFCLGVAIGAEYPTSSVIASEFANQLPAGKRNRYFIWFTGFMIDFGFVVSAFVPFVLLWIFTEKHLRALWRVSIGLGAILPTALFFIRLKMKDSTSFEKLHMKNVRYRDYPWWLIVKFYWFRLTIVSMIWFIYNFSVYSFGTFNAIILGQIIPDAPLWQQWGWSVVFNLFYIPGSFLGAFSADYLGPRLTLAIGVGLQGIIGFIMSACLNGLRKQVAAFTVVFGIFATLGEFGPGGNIGLLASKTSATPIRGQYYGIAAAMGKIGAFVGTWIFPAIQRRYASKTNPDLELQVPFYLSSGLCIFSALLTFFLCPHVGQDAINREDKEFVEYLRKNGFDVSKLGEDSSSVDVDVVKDTDSAEKISETIEVGQKLA</sequence>
<reference key="1">
    <citation type="journal article" date="2004" name="Proc. Natl. Acad. Sci. U.S.A.">
        <title>The diploid genome sequence of Candida albicans.</title>
        <authorList>
            <person name="Jones T."/>
            <person name="Federspiel N.A."/>
            <person name="Chibana H."/>
            <person name="Dungan J."/>
            <person name="Kalman S."/>
            <person name="Magee B.B."/>
            <person name="Newport G."/>
            <person name="Thorstenson Y.R."/>
            <person name="Agabian N."/>
            <person name="Magee P.T."/>
            <person name="Davis R.W."/>
            <person name="Scherer S."/>
        </authorList>
    </citation>
    <scope>NUCLEOTIDE SEQUENCE [LARGE SCALE GENOMIC DNA]</scope>
    <source>
        <strain>SC5314 / ATCC MYA-2876</strain>
    </source>
</reference>
<reference key="2">
    <citation type="journal article" date="2007" name="Genome Biol.">
        <title>Assembly of the Candida albicans genome into sixteen supercontigs aligned on the eight chromosomes.</title>
        <authorList>
            <person name="van het Hoog M."/>
            <person name="Rast T.J."/>
            <person name="Martchenko M."/>
            <person name="Grindle S."/>
            <person name="Dignard D."/>
            <person name="Hogues H."/>
            <person name="Cuomo C."/>
            <person name="Berriman M."/>
            <person name="Scherer S."/>
            <person name="Magee B.B."/>
            <person name="Whiteway M."/>
            <person name="Chibana H."/>
            <person name="Nantel A."/>
            <person name="Magee P.T."/>
        </authorList>
    </citation>
    <scope>GENOME REANNOTATION</scope>
    <source>
        <strain>SC5314 / ATCC MYA-2876</strain>
    </source>
</reference>
<reference key="3">
    <citation type="journal article" date="2013" name="Genome Biol.">
        <title>Assembly of a phased diploid Candida albicans genome facilitates allele-specific measurements and provides a simple model for repeat and indel structure.</title>
        <authorList>
            <person name="Muzzey D."/>
            <person name="Schwartz K."/>
            <person name="Weissman J.S."/>
            <person name="Sherlock G."/>
        </authorList>
    </citation>
    <scope>NUCLEOTIDE SEQUENCE [LARGE SCALE GENOMIC DNA]</scope>
    <scope>GENOME REANNOTATION</scope>
    <source>
        <strain>SC5314 / ATCC MYA-2876</strain>
    </source>
</reference>
<reference key="4">
    <citation type="journal article" date="2013" name="J. Biol. Chem.">
        <title>Glycerophosphocholine utilization by Candida albicans: role of the Git3 transporter in virulence.</title>
        <authorList>
            <person name="Bishop A.C."/>
            <person name="Ganguly S."/>
            <person name="Solis N.V."/>
            <person name="Cooley B.M."/>
            <person name="Jensen-Seaman M.I."/>
            <person name="Filler S.G."/>
            <person name="Mitchell A.P."/>
            <person name="Patton-Vogt J."/>
        </authorList>
    </citation>
    <scope>FUNCTION</scope>
    <scope>DISRUPTION PHENOTYPE</scope>
    <scope>INDUCTION</scope>
</reference>
<proteinExistence type="evidence at transcript level"/>
<organism>
    <name type="scientific">Candida albicans (strain SC5314 / ATCC MYA-2876)</name>
    <name type="common">Yeast</name>
    <dbReference type="NCBI Taxonomy" id="237561"/>
    <lineage>
        <taxon>Eukaryota</taxon>
        <taxon>Fungi</taxon>
        <taxon>Dikarya</taxon>
        <taxon>Ascomycota</taxon>
        <taxon>Saccharomycotina</taxon>
        <taxon>Pichiomycetes</taxon>
        <taxon>Debaryomycetaceae</taxon>
        <taxon>Candida/Lodderomyces clade</taxon>
        <taxon>Candida</taxon>
    </lineage>
</organism>